<keyword id="KW-0614">Plasmid</keyword>
<keyword id="KW-0653">Protein transport</keyword>
<keyword id="KW-0964">Secreted</keyword>
<keyword id="KW-0813">Transport</keyword>
<keyword id="KW-0843">Virulence</keyword>
<name>SCTF_YEREN</name>
<comment type="function">
    <text evidence="1 2 3">Component of the type III secretion system (T3SS), also called injectisome, which is used to inject bacterial effector proteins into eukaryotic host cells (PubMed:11287645, PubMed:14580388, PubMed:17697254). YscF/SctF forms the external needle filament that protrudes from the bacterial surface (PubMed:11287645, PubMed:17697254). The needle is not sufficient by itself for the formation of a pore allowing translocation of the Yop effectors across the host cell membrane (PubMed:14580388).</text>
</comment>
<comment type="activity regulation">
    <text evidence="4">The secretion and/or polymerization may be controlled by the type III secretion system regulator YopR.</text>
</comment>
<comment type="subunit">
    <text evidence="1 3 5">The core secretion machinery of the T3SS is composed of approximately 20 different proteins, including cytoplasmic components, a base, an export apparatus and a needle (PubMed:30107569). This subunit polymerizes and forms the helical needle filament (PubMed:11287645, PubMed:17697254). In Y.enterocolitica E40, the needles are composed of 139 (plus-minus 19) YscF/SctF subunits (PubMed:17697254).</text>
</comment>
<comment type="subcellular location">
    <subcellularLocation>
        <location evidence="1">Secreted</location>
    </subcellularLocation>
    <subcellularLocation>
        <location evidence="1">Cell surface</location>
    </subcellularLocation>
</comment>
<comment type="induction">
    <text>At 37 degrees Celsius in the absence of calcium.</text>
</comment>
<comment type="similarity">
    <text evidence="8">Belongs to the SctF family.</text>
</comment>
<evidence type="ECO:0000269" key="1">
    <source>
    </source>
</evidence>
<evidence type="ECO:0000269" key="2">
    <source>
    </source>
</evidence>
<evidence type="ECO:0000269" key="3">
    <source>
    </source>
</evidence>
<evidence type="ECO:0000269" key="4">
    <source>
    </source>
</evidence>
<evidence type="ECO:0000269" key="5">
    <source>
    </source>
</evidence>
<evidence type="ECO:0000303" key="6">
    <source>
    </source>
</evidence>
<evidence type="ECO:0000303" key="7">
    <source>
    </source>
</evidence>
<evidence type="ECO:0000305" key="8"/>
<reference key="1">
    <citation type="journal article" date="1991" name="J. Bacteriol.">
        <title>Analysis of virC, an operon involved in the secretion of Yop proteins by Yersinia enterocolitica.</title>
        <authorList>
            <person name="Michiels T."/>
            <person name="Vanooteghem J.-C."/>
            <person name="de Rouvroit C."/>
            <person name="China B."/>
            <person name="Gustin A."/>
            <person name="Boudry P."/>
            <person name="Cornelis G.R."/>
        </authorList>
    </citation>
    <scope>NUCLEOTIDE SEQUENCE [GENOMIC DNA]</scope>
    <source>
        <strain>439-80 / Serotype O:9</strain>
    </source>
</reference>
<reference key="2">
    <citation type="journal article" date="2001" name="Proc. Natl. Acad. Sci. U.S.A.">
        <title>Polymerization of a single protein of the pathogen Yersinia enterocolitica into needles punctures eukaryotic cells.</title>
        <authorList>
            <person name="Hoiczyk E."/>
            <person name="Blobel G."/>
        </authorList>
    </citation>
    <scope>FUNCTION</scope>
    <scope>SUBUNIT</scope>
    <scope>SUBCELLULAR LOCATION</scope>
    <source>
        <strain>ATCC 51871 / WA-314 / Serotype O:8</strain>
    </source>
</reference>
<reference key="3">
    <citation type="journal article" date="2003" name="Microb. Pathog.">
        <title>Genetic analysis of the formation of the Ysc-Yop translocation pore in macrophages by Yersinia enterocolitica: role of LcrV, YscF and YopN.</title>
        <authorList>
            <person name="Marenne M.N."/>
            <person name="Journet L."/>
            <person name="Mota L.J."/>
            <person name="Cornelis G.R."/>
        </authorList>
    </citation>
    <scope>FUNCTION</scope>
</reference>
<reference key="4">
    <citation type="journal article" date="2007" name="Mol. Microbiol.">
        <title>Function and molecular architecture of the Yersinia injectisome tip complex.</title>
        <authorList>
            <person name="Broz P."/>
            <person name="Mueller C.A."/>
            <person name="Mueller S.A."/>
            <person name="Philippsen A."/>
            <person name="Sorg I."/>
            <person name="Engel A."/>
            <person name="Cornelis G.R."/>
        </authorList>
    </citation>
    <scope>FUNCTION</scope>
    <scope>SUBUNIT</scope>
    <source>
        <strain>E40 / Serotype O:9</strain>
    </source>
</reference>
<reference key="5">
    <citation type="journal article" date="2010" name="Mol. Microbiol.">
        <title>YopR impacts type III needle polymerization in Yersinia species.</title>
        <authorList>
            <person name="Blaylock B."/>
            <person name="Berube B.J."/>
            <person name="Schneewind O."/>
        </authorList>
    </citation>
    <scope>ACTIVITY REGULATION</scope>
    <source>
        <strain>W22703 / Serotype O:9 / Biotype 2</strain>
    </source>
</reference>
<reference key="6">
    <citation type="journal article" date="1998" name="Microbiol. Mol. Biol. Rev.">
        <title>Type III protein secretion systems in bacterial pathogens of animals and plants.</title>
        <authorList>
            <person name="Hueck C.J."/>
        </authorList>
    </citation>
    <scope>REVIEW</scope>
    <scope>NOMENCLATURE</scope>
</reference>
<reference key="7">
    <citation type="journal article" date="2018" name="FEMS Microbiol. Lett.">
        <title>Bacterial type III secretion systems: a complex device for the delivery of bacterial effector proteins into eukaryotic host cells.</title>
        <authorList>
            <person name="Wagner S."/>
            <person name="Grin I."/>
            <person name="Malmsheimer S."/>
            <person name="Singh N."/>
            <person name="Torres-Vargas C.E."/>
            <person name="Westerhausen S."/>
        </authorList>
    </citation>
    <scope>REVIEW</scope>
    <scope>SUBUNIT</scope>
</reference>
<geneLocation type="plasmid">
    <name>pYV</name>
</geneLocation>
<protein>
    <recommendedName>
        <fullName evidence="8">Type 3 secretion system needle filament protein</fullName>
        <shortName evidence="8">T3SS needle filament protein</shortName>
    </recommendedName>
    <alternativeName>
        <fullName evidence="8">Yop proteins translocation protein F</fullName>
    </alternativeName>
</protein>
<organism>
    <name type="scientific">Yersinia enterocolitica</name>
    <dbReference type="NCBI Taxonomy" id="630"/>
    <lineage>
        <taxon>Bacteria</taxon>
        <taxon>Pseudomonadati</taxon>
        <taxon>Pseudomonadota</taxon>
        <taxon>Gammaproteobacteria</taxon>
        <taxon>Enterobacterales</taxon>
        <taxon>Yersiniaceae</taxon>
        <taxon>Yersinia</taxon>
    </lineage>
</organism>
<sequence length="87" mass="9449">MSNFSGFTKGNDIADLDAVAQTLKKPADDANKAVNDSIAALKDTPDNPALLADLQHSINKWSVIYNISSTIVRSMKDLMQGILQKFP</sequence>
<gene>
    <name evidence="7" type="primary">sctF</name>
    <name evidence="6" type="synonym">yscF</name>
</gene>
<proteinExistence type="evidence at protein level"/>
<feature type="chain" id="PRO_0000066481" description="Type 3 secretion system needle filament protein">
    <location>
        <begin position="1"/>
        <end position="87"/>
    </location>
</feature>
<dbReference type="EMBL" id="M74011">
    <property type="protein sequence ID" value="AAC37023.1"/>
    <property type="molecule type" value="Genomic_DNA"/>
</dbReference>
<dbReference type="PIR" id="F40361">
    <property type="entry name" value="F40361"/>
</dbReference>
<dbReference type="RefSeq" id="WP_010891228.1">
    <property type="nucleotide sequence ID" value="NZ_KN150737.1"/>
</dbReference>
<dbReference type="SMR" id="Q01247"/>
<dbReference type="KEGG" id="yet:CH48_4197"/>
<dbReference type="GO" id="GO:0009986">
    <property type="term" value="C:cell surface"/>
    <property type="evidence" value="ECO:0007669"/>
    <property type="project" value="UniProtKB-SubCell"/>
</dbReference>
<dbReference type="GO" id="GO:0005576">
    <property type="term" value="C:extracellular region"/>
    <property type="evidence" value="ECO:0007669"/>
    <property type="project" value="UniProtKB-SubCell"/>
</dbReference>
<dbReference type="GO" id="GO:0030257">
    <property type="term" value="C:type III protein secretion system complex"/>
    <property type="evidence" value="ECO:0007669"/>
    <property type="project" value="InterPro"/>
</dbReference>
<dbReference type="GO" id="GO:0030254">
    <property type="term" value="P:protein secretion by the type III secretion system"/>
    <property type="evidence" value="ECO:0007669"/>
    <property type="project" value="InterPro"/>
</dbReference>
<dbReference type="FunFam" id="1.20.58.90:FF:000014">
    <property type="entry name" value="Type III secretion apparatus needle protein YscF"/>
    <property type="match status" value="1"/>
</dbReference>
<dbReference type="Gene3D" id="1.20.58.90">
    <property type="match status" value="1"/>
</dbReference>
<dbReference type="InterPro" id="IPR021123">
    <property type="entry name" value="T3SS_needle-like"/>
</dbReference>
<dbReference type="InterPro" id="IPR037203">
    <property type="entry name" value="T3SS_needle-like_sf"/>
</dbReference>
<dbReference type="InterPro" id="IPR011841">
    <property type="entry name" value="T3SS_needle_YscF"/>
</dbReference>
<dbReference type="NCBIfam" id="TIGR02105">
    <property type="entry name" value="III_needle"/>
    <property type="match status" value="1"/>
</dbReference>
<dbReference type="Pfam" id="PF09392">
    <property type="entry name" value="T3SS_needle_F"/>
    <property type="match status" value="1"/>
</dbReference>
<dbReference type="SUPFAM" id="SSF140129">
    <property type="entry name" value="MxiH-like"/>
    <property type="match status" value="1"/>
</dbReference>
<accession>Q01247</accession>